<gene>
    <name type="ORF">LIS119-2</name>
</gene>
<sequence length="119" mass="13721">MKVLLGLLLGYSVLILAHELPRTQHPPKEELPYWCTYVKNCDFCWDCQNGICKNKITNESISMNSIVNCIVNRNSWGCFYEISVKMPNHHNMECSHPRPYTGNEIFMEKWGGVIIGQSL</sequence>
<accession>P26704</accession>
<reference key="1">
    <citation type="journal article" date="1990" name="Virology">
        <title>Genetic variation and multigene families in African swine fever virus.</title>
        <authorList>
            <person name="de la Vega I."/>
            <person name="Vinuela E."/>
            <person name="Blasco R."/>
        </authorList>
    </citation>
    <scope>NUCLEOTIDE SEQUENCE [GENOMIC DNA]</scope>
</reference>
<protein>
    <recommendedName>
        <fullName>Protein MGF 110-11L</fullName>
    </recommendedName>
</protein>
<dbReference type="EMBL" id="M58155">
    <property type="protein sequence ID" value="AAA42711.1"/>
    <property type="molecule type" value="Genomic_DNA"/>
</dbReference>
<dbReference type="PIR" id="E45348">
    <property type="entry name" value="E45348"/>
</dbReference>
<dbReference type="InterPro" id="IPR004848">
    <property type="entry name" value="ASFV_fam_110"/>
</dbReference>
<dbReference type="Pfam" id="PF01639">
    <property type="entry name" value="v110"/>
    <property type="match status" value="1"/>
</dbReference>
<proteinExistence type="inferred from homology"/>
<comment type="similarity">
    <text evidence="2">Belongs to the asfivirus MGF 110 family.</text>
</comment>
<evidence type="ECO:0000255" key="1"/>
<evidence type="ECO:0000305" key="2"/>
<feature type="signal peptide" evidence="1">
    <location>
        <begin position="1"/>
        <end position="17"/>
    </location>
</feature>
<feature type="chain" id="PRO_0000036729" description="Protein MGF 110-11L">
    <location>
        <begin position="18"/>
        <end position="119"/>
    </location>
</feature>
<name>11011_ASFL5</name>
<keyword id="KW-0244">Early protein</keyword>
<keyword id="KW-0732">Signal</keyword>
<organismHost>
    <name type="scientific">Ornithodoros</name>
    <name type="common">relapsing fever ticks</name>
    <dbReference type="NCBI Taxonomy" id="6937"/>
</organismHost>
<organismHost>
    <name type="scientific">Sus scrofa</name>
    <name type="common">Pig</name>
    <dbReference type="NCBI Taxonomy" id="9823"/>
</organismHost>
<organism>
    <name type="scientific">African swine fever virus (isolate Portugal/Lis 57/1957)</name>
    <name type="common">ASFV</name>
    <dbReference type="NCBI Taxonomy" id="10499"/>
    <lineage>
        <taxon>Viruses</taxon>
        <taxon>Varidnaviria</taxon>
        <taxon>Bamfordvirae</taxon>
        <taxon>Nucleocytoviricota</taxon>
        <taxon>Pokkesviricetes</taxon>
        <taxon>Asfuvirales</taxon>
        <taxon>Asfarviridae</taxon>
        <taxon>Asfivirus</taxon>
        <taxon>African swine fever virus</taxon>
    </lineage>
</organism>